<dbReference type="EC" id="7.1.1.-" evidence="1"/>
<dbReference type="EMBL" id="AE000516">
    <property type="protein sequence ID" value="AAK47573.1"/>
    <property type="molecule type" value="Genomic_DNA"/>
</dbReference>
<dbReference type="PIR" id="C70647">
    <property type="entry name" value="C70647"/>
</dbReference>
<dbReference type="RefSeq" id="WP_003416420.1">
    <property type="nucleotide sequence ID" value="NZ_KK341227.1"/>
</dbReference>
<dbReference type="SMR" id="P9WJH0"/>
<dbReference type="KEGG" id="mtc:MT3234"/>
<dbReference type="PATRIC" id="fig|83331.31.peg.3482"/>
<dbReference type="HOGENOM" id="CLU_055737_7_3_11"/>
<dbReference type="Proteomes" id="UP000001020">
    <property type="component" value="Chromosome"/>
</dbReference>
<dbReference type="GO" id="GO:0005886">
    <property type="term" value="C:plasma membrane"/>
    <property type="evidence" value="ECO:0007669"/>
    <property type="project" value="UniProtKB-SubCell"/>
</dbReference>
<dbReference type="GO" id="GO:0045271">
    <property type="term" value="C:respiratory chain complex I"/>
    <property type="evidence" value="ECO:0007669"/>
    <property type="project" value="TreeGrafter"/>
</dbReference>
<dbReference type="GO" id="GO:0051539">
    <property type="term" value="F:4 iron, 4 sulfur cluster binding"/>
    <property type="evidence" value="ECO:0007669"/>
    <property type="project" value="UniProtKB-KW"/>
</dbReference>
<dbReference type="GO" id="GO:0005506">
    <property type="term" value="F:iron ion binding"/>
    <property type="evidence" value="ECO:0007669"/>
    <property type="project" value="UniProtKB-UniRule"/>
</dbReference>
<dbReference type="GO" id="GO:0008137">
    <property type="term" value="F:NADH dehydrogenase (ubiquinone) activity"/>
    <property type="evidence" value="ECO:0007669"/>
    <property type="project" value="InterPro"/>
</dbReference>
<dbReference type="GO" id="GO:0050136">
    <property type="term" value="F:NADH:ubiquinone reductase (non-electrogenic) activity"/>
    <property type="evidence" value="ECO:0007669"/>
    <property type="project" value="UniProtKB-UniRule"/>
</dbReference>
<dbReference type="GO" id="GO:0048038">
    <property type="term" value="F:quinone binding"/>
    <property type="evidence" value="ECO:0007669"/>
    <property type="project" value="UniProtKB-KW"/>
</dbReference>
<dbReference type="GO" id="GO:0009060">
    <property type="term" value="P:aerobic respiration"/>
    <property type="evidence" value="ECO:0007669"/>
    <property type="project" value="TreeGrafter"/>
</dbReference>
<dbReference type="GO" id="GO:0015990">
    <property type="term" value="P:electron transport coupled proton transport"/>
    <property type="evidence" value="ECO:0007669"/>
    <property type="project" value="TreeGrafter"/>
</dbReference>
<dbReference type="FunFam" id="3.40.50.12280:FF:000004">
    <property type="entry name" value="NADH-quinone oxidoreductase subunit B"/>
    <property type="match status" value="1"/>
</dbReference>
<dbReference type="Gene3D" id="3.40.50.12280">
    <property type="match status" value="1"/>
</dbReference>
<dbReference type="HAMAP" id="MF_01356">
    <property type="entry name" value="NDH1_NuoB"/>
    <property type="match status" value="1"/>
</dbReference>
<dbReference type="InterPro" id="IPR006137">
    <property type="entry name" value="NADH_UbQ_OxRdtase-like_20kDa"/>
</dbReference>
<dbReference type="InterPro" id="IPR006138">
    <property type="entry name" value="NADH_UQ_OxRdtase_20Kd_su"/>
</dbReference>
<dbReference type="NCBIfam" id="TIGR01957">
    <property type="entry name" value="nuoB_fam"/>
    <property type="match status" value="1"/>
</dbReference>
<dbReference type="NCBIfam" id="NF005012">
    <property type="entry name" value="PRK06411.1"/>
    <property type="match status" value="1"/>
</dbReference>
<dbReference type="PANTHER" id="PTHR11995">
    <property type="entry name" value="NADH DEHYDROGENASE"/>
    <property type="match status" value="1"/>
</dbReference>
<dbReference type="PANTHER" id="PTHR11995:SF14">
    <property type="entry name" value="NADH DEHYDROGENASE [UBIQUINONE] IRON-SULFUR PROTEIN 7, MITOCHONDRIAL"/>
    <property type="match status" value="1"/>
</dbReference>
<dbReference type="Pfam" id="PF01058">
    <property type="entry name" value="Oxidored_q6"/>
    <property type="match status" value="1"/>
</dbReference>
<dbReference type="SUPFAM" id="SSF56770">
    <property type="entry name" value="HydA/Nqo6-like"/>
    <property type="match status" value="1"/>
</dbReference>
<dbReference type="PROSITE" id="PS01150">
    <property type="entry name" value="COMPLEX1_20K"/>
    <property type="match status" value="1"/>
</dbReference>
<gene>
    <name evidence="1" type="primary">nuoB</name>
    <name type="ordered locus">MT3234</name>
</gene>
<reference key="1">
    <citation type="journal article" date="2002" name="J. Bacteriol.">
        <title>Whole-genome comparison of Mycobacterium tuberculosis clinical and laboratory strains.</title>
        <authorList>
            <person name="Fleischmann R.D."/>
            <person name="Alland D."/>
            <person name="Eisen J.A."/>
            <person name="Carpenter L."/>
            <person name="White O."/>
            <person name="Peterson J.D."/>
            <person name="DeBoy R.T."/>
            <person name="Dodson R.J."/>
            <person name="Gwinn M.L."/>
            <person name="Haft D.H."/>
            <person name="Hickey E.K."/>
            <person name="Kolonay J.F."/>
            <person name="Nelson W.C."/>
            <person name="Umayam L.A."/>
            <person name="Ermolaeva M.D."/>
            <person name="Salzberg S.L."/>
            <person name="Delcher A."/>
            <person name="Utterback T.R."/>
            <person name="Weidman J.F."/>
            <person name="Khouri H.M."/>
            <person name="Gill J."/>
            <person name="Mikula A."/>
            <person name="Bishai W."/>
            <person name="Jacobs W.R. Jr."/>
            <person name="Venter J.C."/>
            <person name="Fraser C.M."/>
        </authorList>
    </citation>
    <scope>NUCLEOTIDE SEQUENCE [LARGE SCALE GENOMIC DNA]</scope>
    <source>
        <strain>CDC 1551 / Oshkosh</strain>
    </source>
</reference>
<keyword id="KW-0004">4Fe-4S</keyword>
<keyword id="KW-1003">Cell membrane</keyword>
<keyword id="KW-0408">Iron</keyword>
<keyword id="KW-0411">Iron-sulfur</keyword>
<keyword id="KW-0472">Membrane</keyword>
<keyword id="KW-0479">Metal-binding</keyword>
<keyword id="KW-0520">NAD</keyword>
<keyword id="KW-0874">Quinone</keyword>
<keyword id="KW-1185">Reference proteome</keyword>
<keyword id="KW-1278">Translocase</keyword>
<keyword id="KW-0813">Transport</keyword>
<feature type="chain" id="PRO_0000427831" description="NADH-quinone oxidoreductase subunit B">
    <location>
        <begin position="1"/>
        <end position="184"/>
    </location>
</feature>
<feature type="binding site" evidence="1">
    <location>
        <position position="37"/>
    </location>
    <ligand>
        <name>[4Fe-4S] cluster</name>
        <dbReference type="ChEBI" id="CHEBI:49883"/>
    </ligand>
</feature>
<feature type="binding site" evidence="1">
    <location>
        <position position="38"/>
    </location>
    <ligand>
        <name>[4Fe-4S] cluster</name>
        <dbReference type="ChEBI" id="CHEBI:49883"/>
    </ligand>
</feature>
<feature type="binding site" evidence="1">
    <location>
        <position position="103"/>
    </location>
    <ligand>
        <name>[4Fe-4S] cluster</name>
        <dbReference type="ChEBI" id="CHEBI:49883"/>
    </ligand>
</feature>
<feature type="binding site" evidence="1">
    <location>
        <position position="132"/>
    </location>
    <ligand>
        <name>[4Fe-4S] cluster</name>
        <dbReference type="ChEBI" id="CHEBI:49883"/>
    </ligand>
</feature>
<protein>
    <recommendedName>
        <fullName evidence="1">NADH-quinone oxidoreductase subunit B</fullName>
        <ecNumber evidence="1">7.1.1.-</ecNumber>
    </recommendedName>
    <alternativeName>
        <fullName evidence="1">NADH dehydrogenase I subunit B</fullName>
    </alternativeName>
    <alternativeName>
        <fullName evidence="1">NDH-1 subunit B</fullName>
    </alternativeName>
</protein>
<comment type="function">
    <text evidence="1">NDH-1 shuttles electrons from NADH, via FMN and iron-sulfur (Fe-S) centers, to quinones in the respiratory chain. The immediate electron acceptor for the enzyme in this species is believed to be a menaquinone. Couples the redox reaction to proton translocation (for every two electrons transferred, four hydrogen ions are translocated across the cytoplasmic membrane), and thus conserves the redox energy in a proton gradient.</text>
</comment>
<comment type="catalytic activity">
    <reaction evidence="1">
        <text>a quinone + NADH + 5 H(+)(in) = a quinol + NAD(+) + 4 H(+)(out)</text>
        <dbReference type="Rhea" id="RHEA:57888"/>
        <dbReference type="ChEBI" id="CHEBI:15378"/>
        <dbReference type="ChEBI" id="CHEBI:24646"/>
        <dbReference type="ChEBI" id="CHEBI:57540"/>
        <dbReference type="ChEBI" id="CHEBI:57945"/>
        <dbReference type="ChEBI" id="CHEBI:132124"/>
    </reaction>
</comment>
<comment type="cofactor">
    <cofactor evidence="1">
        <name>[4Fe-4S] cluster</name>
        <dbReference type="ChEBI" id="CHEBI:49883"/>
    </cofactor>
    <text evidence="1">Binds 1 [4Fe-4S] cluster.</text>
</comment>
<comment type="subunit">
    <text evidence="1">NDH-1 is composed of 14 different subunits. Subunits NuoB, C, D, E, F, and G constitute the peripheral sector of the complex.</text>
</comment>
<comment type="subcellular location">
    <subcellularLocation>
        <location evidence="1">Cell membrane</location>
        <topology evidence="1">Peripheral membrane protein</topology>
        <orientation evidence="1">Cytoplasmic side</orientation>
    </subcellularLocation>
</comment>
<comment type="similarity">
    <text evidence="1">Belongs to the complex I 20 kDa subunit family.</text>
</comment>
<accession>P9WJH0</accession>
<accession>L0TBN8</accession>
<accession>P65575</accession>
<accession>P95180</accession>
<name>NUOB_MYCTO</name>
<evidence type="ECO:0000255" key="1">
    <source>
        <dbReference type="HAMAP-Rule" id="MF_01356"/>
    </source>
</evidence>
<organism>
    <name type="scientific">Mycobacterium tuberculosis (strain CDC 1551 / Oshkosh)</name>
    <dbReference type="NCBI Taxonomy" id="83331"/>
    <lineage>
        <taxon>Bacteria</taxon>
        <taxon>Bacillati</taxon>
        <taxon>Actinomycetota</taxon>
        <taxon>Actinomycetes</taxon>
        <taxon>Mycobacteriales</taxon>
        <taxon>Mycobacteriaceae</taxon>
        <taxon>Mycobacterium</taxon>
        <taxon>Mycobacterium tuberculosis complex</taxon>
    </lineage>
</organism>
<sequence>MGLEEQLPGGILLSTVEKVAGYVRKNSLWPATFGLACCAIEMMATAGPRFDIARFGMERFSATPRQADLMIVAGRVSQKMAPVLRQIYDQMAEPKWVLAMGVCASSGGMFNNYAIVQGVDHVVPVDIYLPGCPPRPEMLLHAILKLHEKIQQMPLGINRERAIAEAEEAALLARPTIEMRGLLR</sequence>
<proteinExistence type="inferred from homology"/>